<name>BBE8_ARATH</name>
<proteinExistence type="evidence at transcript level"/>
<organism>
    <name type="scientific">Arabidopsis thaliana</name>
    <name type="common">Mouse-ear cress</name>
    <dbReference type="NCBI Taxonomy" id="3702"/>
    <lineage>
        <taxon>Eukaryota</taxon>
        <taxon>Viridiplantae</taxon>
        <taxon>Streptophyta</taxon>
        <taxon>Embryophyta</taxon>
        <taxon>Tracheophyta</taxon>
        <taxon>Spermatophyta</taxon>
        <taxon>Magnoliopsida</taxon>
        <taxon>eudicotyledons</taxon>
        <taxon>Gunneridae</taxon>
        <taxon>Pentapetalae</taxon>
        <taxon>rosids</taxon>
        <taxon>malvids</taxon>
        <taxon>Brassicales</taxon>
        <taxon>Brassicaceae</taxon>
        <taxon>Camelineae</taxon>
        <taxon>Arabidopsis</taxon>
    </lineage>
</organism>
<accession>Q9SA85</accession>
<keyword id="KW-0134">Cell wall</keyword>
<keyword id="KW-1015">Disulfide bond</keyword>
<keyword id="KW-0274">FAD</keyword>
<keyword id="KW-0285">Flavoprotein</keyword>
<keyword id="KW-0325">Glycoprotein</keyword>
<keyword id="KW-0547">Nucleotide-binding</keyword>
<keyword id="KW-0560">Oxidoreductase</keyword>
<keyword id="KW-1185">Reference proteome</keyword>
<keyword id="KW-0964">Secreted</keyword>
<keyword id="KW-0732">Signal</keyword>
<sequence>MKYALILVLFFVVFIWQSSSSSANSETFTQCLTSNSDPKHPISPAIFFSGNGSYSSVLQANIRNLRFNTTSTPKPFLIIAATHESHVQAAITCGKRHNLQMKIRSGGHDYDGLSYVTYSGKPFFVLDMFNLRSVDVDVASKTAWVQTGAILGEVYYYIWEKSKTLAYPAGICPTVGVGGHISGGGYGNMMRKYGLTVDNTIDARMVDVNGKILDRKLMGEDLYWAINGGGGGSYGVVLAYKINLVEVPENVTVFRISRTLEQNATDIIHRWQQVAPKLPDELFIRTVIDVVNGTVSSQKTVRTTFIAMFLGDTTTLLSILNRRFPELGLVRSDCTETSWIQSVLFWTNIQVGSSETLLLQRNQPVNYLKRKSDYVREPISRTGLESIWKKMIELEIPTMAFNPYGGEMGRISSTVTPFPYRAGNLWKIQYGANWRDETLTDRYMELTRKLYQFMTPFVSKNPRQSFFNYRDVDLGINSHNGKISSYVEGKRYGKKYFAGNFERLVKIKTRVDSGNFFRNEQSIPVLP</sequence>
<gene>
    <name evidence="7" type="ordered locus">At1g30700</name>
    <name evidence="8" type="ORF">T5I8.15</name>
</gene>
<dbReference type="EC" id="1.1.1.-" evidence="1"/>
<dbReference type="EMBL" id="AC007060">
    <property type="protein sequence ID" value="AAD25757.1"/>
    <property type="molecule type" value="Genomic_DNA"/>
</dbReference>
<dbReference type="EMBL" id="CP002684">
    <property type="protein sequence ID" value="AEE31262.1"/>
    <property type="molecule type" value="Genomic_DNA"/>
</dbReference>
<dbReference type="EMBL" id="AF419607">
    <property type="protein sequence ID" value="AAL31939.1"/>
    <property type="molecule type" value="mRNA"/>
</dbReference>
<dbReference type="EMBL" id="AY140079">
    <property type="protein sequence ID" value="AAM98220.1"/>
    <property type="molecule type" value="mRNA"/>
</dbReference>
<dbReference type="EMBL" id="BT010384">
    <property type="protein sequence ID" value="AAQ56827.1"/>
    <property type="molecule type" value="mRNA"/>
</dbReference>
<dbReference type="PIR" id="E86432">
    <property type="entry name" value="E86432"/>
</dbReference>
<dbReference type="RefSeq" id="NP_174357.1">
    <property type="nucleotide sequence ID" value="NM_102806.3"/>
</dbReference>
<dbReference type="SMR" id="Q9SA85"/>
<dbReference type="FunCoup" id="Q9SA85">
    <property type="interactions" value="55"/>
</dbReference>
<dbReference type="STRING" id="3702.Q9SA85"/>
<dbReference type="GlyGen" id="Q9SA85">
    <property type="glycosylation" value="6 sites"/>
</dbReference>
<dbReference type="PaxDb" id="3702-AT1G30700.1"/>
<dbReference type="ProteomicsDB" id="240640"/>
<dbReference type="EnsemblPlants" id="AT1G30700.1">
    <property type="protein sequence ID" value="AT1G30700.1"/>
    <property type="gene ID" value="AT1G30700"/>
</dbReference>
<dbReference type="GeneID" id="839950"/>
<dbReference type="Gramene" id="AT1G30700.1">
    <property type="protein sequence ID" value="AT1G30700.1"/>
    <property type="gene ID" value="AT1G30700"/>
</dbReference>
<dbReference type="KEGG" id="ath:AT1G30700"/>
<dbReference type="Araport" id="AT1G30700"/>
<dbReference type="TAIR" id="AT1G30700">
    <property type="gene designation" value="ATBBE8"/>
</dbReference>
<dbReference type="eggNOG" id="ENOG502QVY1">
    <property type="taxonomic scope" value="Eukaryota"/>
</dbReference>
<dbReference type="HOGENOM" id="CLU_018354_6_0_1"/>
<dbReference type="InParanoid" id="Q9SA85"/>
<dbReference type="OMA" id="RYMELTR"/>
<dbReference type="OrthoDB" id="407275at2759"/>
<dbReference type="PhylomeDB" id="Q9SA85"/>
<dbReference type="BioCyc" id="ARA:AT1G30700-MONOMER"/>
<dbReference type="PRO" id="PR:Q9SA85"/>
<dbReference type="Proteomes" id="UP000006548">
    <property type="component" value="Chromosome 1"/>
</dbReference>
<dbReference type="ExpressionAtlas" id="Q9SA85">
    <property type="expression patterns" value="baseline and differential"/>
</dbReference>
<dbReference type="GO" id="GO:0005576">
    <property type="term" value="C:extracellular region"/>
    <property type="evidence" value="ECO:0007669"/>
    <property type="project" value="UniProtKB-KW"/>
</dbReference>
<dbReference type="GO" id="GO:0009505">
    <property type="term" value="C:plant-type cell wall"/>
    <property type="evidence" value="ECO:0000250"/>
    <property type="project" value="UniProtKB"/>
</dbReference>
<dbReference type="GO" id="GO:0071949">
    <property type="term" value="F:FAD binding"/>
    <property type="evidence" value="ECO:0007669"/>
    <property type="project" value="InterPro"/>
</dbReference>
<dbReference type="GO" id="GO:0016491">
    <property type="term" value="F:oxidoreductase activity"/>
    <property type="evidence" value="ECO:0007669"/>
    <property type="project" value="UniProtKB-KW"/>
</dbReference>
<dbReference type="FunFam" id="3.30.43.10:FF:000004">
    <property type="entry name" value="Berberine bridge enzyme-like 15"/>
    <property type="match status" value="1"/>
</dbReference>
<dbReference type="Gene3D" id="3.30.465.10">
    <property type="match status" value="1"/>
</dbReference>
<dbReference type="Gene3D" id="3.40.462.20">
    <property type="match status" value="1"/>
</dbReference>
<dbReference type="Gene3D" id="3.30.43.10">
    <property type="entry name" value="Uridine Diphospho-n-acetylenolpyruvylglucosamine Reductase, domain 2"/>
    <property type="match status" value="1"/>
</dbReference>
<dbReference type="InterPro" id="IPR012951">
    <property type="entry name" value="BBE"/>
</dbReference>
<dbReference type="InterPro" id="IPR016166">
    <property type="entry name" value="FAD-bd_PCMH"/>
</dbReference>
<dbReference type="InterPro" id="IPR036318">
    <property type="entry name" value="FAD-bd_PCMH-like_sf"/>
</dbReference>
<dbReference type="InterPro" id="IPR016167">
    <property type="entry name" value="FAD-bd_PCMH_sub1"/>
</dbReference>
<dbReference type="InterPro" id="IPR016169">
    <property type="entry name" value="FAD-bd_PCMH_sub2"/>
</dbReference>
<dbReference type="InterPro" id="IPR006094">
    <property type="entry name" value="Oxid_FAD_bind_N"/>
</dbReference>
<dbReference type="PANTHER" id="PTHR32448">
    <property type="entry name" value="OS08G0158400 PROTEIN"/>
    <property type="match status" value="1"/>
</dbReference>
<dbReference type="Pfam" id="PF08031">
    <property type="entry name" value="BBE"/>
    <property type="match status" value="1"/>
</dbReference>
<dbReference type="Pfam" id="PF01565">
    <property type="entry name" value="FAD_binding_4"/>
    <property type="match status" value="1"/>
</dbReference>
<dbReference type="SUPFAM" id="SSF56176">
    <property type="entry name" value="FAD-binding/transporter-associated domain-like"/>
    <property type="match status" value="1"/>
</dbReference>
<dbReference type="PROSITE" id="PS51387">
    <property type="entry name" value="FAD_PCMH"/>
    <property type="match status" value="1"/>
</dbReference>
<protein>
    <recommendedName>
        <fullName evidence="5">Berberine bridge enzyme-like 8</fullName>
        <shortName evidence="5">AtBBE-like 8</shortName>
        <ecNumber evidence="1">1.1.1.-</ecNumber>
    </recommendedName>
</protein>
<comment type="cofactor">
    <cofactor evidence="1">
        <name>FAD</name>
        <dbReference type="ChEBI" id="CHEBI:57692"/>
    </cofactor>
    <text evidence="1">Binds 1 FAD per subunit in a bicovalent manner.</text>
</comment>
<comment type="subcellular location">
    <subcellularLocation>
        <location evidence="1">Secreted</location>
        <location evidence="1">Cell wall</location>
    </subcellularLocation>
</comment>
<comment type="PTM">
    <text evidence="1">The FAD cofactor is bound via a bicovalent 6-S-cysteinyl, 8alpha-N1-histidyl FAD linkage.</text>
</comment>
<comment type="similarity">
    <text evidence="6">Belongs to the oxygen-dependent FAD-linked oxidoreductase family.</text>
</comment>
<feature type="signal peptide" evidence="2">
    <location>
        <begin position="1"/>
        <end position="20"/>
    </location>
</feature>
<feature type="chain" id="PRO_5008180353" description="Berberine bridge enzyme-like 8">
    <location>
        <begin position="21"/>
        <end position="527"/>
    </location>
</feature>
<feature type="domain" description="FAD-binding PCMH-type" evidence="4">
    <location>
        <begin position="71"/>
        <end position="247"/>
    </location>
</feature>
<feature type="glycosylation site" description="N-linked (GlcNAc...) asparagine" evidence="3">
    <location>
        <position position="51"/>
    </location>
</feature>
<feature type="glycosylation site" description="N-linked (GlcNAc...) asparagine" evidence="3">
    <location>
        <position position="68"/>
    </location>
</feature>
<feature type="glycosylation site" description="N-linked (GlcNAc...) asparagine" evidence="3">
    <location>
        <position position="250"/>
    </location>
</feature>
<feature type="glycosylation site" description="N-linked (GlcNAc...) asparagine" evidence="3">
    <location>
        <position position="263"/>
    </location>
</feature>
<feature type="glycosylation site" description="N-linked (GlcNAc...) asparagine" evidence="3">
    <location>
        <position position="292"/>
    </location>
</feature>
<feature type="disulfide bond" evidence="1">
    <location>
        <begin position="31"/>
        <end position="93"/>
    </location>
</feature>
<feature type="cross-link" description="6-(S-cysteinyl)-8alpha-(pros-histidyl)-FAD (His-Cys)" evidence="1">
    <location>
        <begin position="108"/>
        <end position="172"/>
    </location>
</feature>
<evidence type="ECO:0000250" key="1">
    <source>
        <dbReference type="UniProtKB" id="O64743"/>
    </source>
</evidence>
<evidence type="ECO:0000255" key="2"/>
<evidence type="ECO:0000255" key="3">
    <source>
        <dbReference type="PROSITE-ProRule" id="PRU00498"/>
    </source>
</evidence>
<evidence type="ECO:0000255" key="4">
    <source>
        <dbReference type="PROSITE-ProRule" id="PRU00718"/>
    </source>
</evidence>
<evidence type="ECO:0000303" key="5">
    <source>
    </source>
</evidence>
<evidence type="ECO:0000305" key="6"/>
<evidence type="ECO:0000312" key="7">
    <source>
        <dbReference type="Araport" id="AT1G30700"/>
    </source>
</evidence>
<evidence type="ECO:0000312" key="8">
    <source>
        <dbReference type="EMBL" id="AAD25757.1"/>
    </source>
</evidence>
<reference key="1">
    <citation type="journal article" date="2000" name="Nature">
        <title>Sequence and analysis of chromosome 1 of the plant Arabidopsis thaliana.</title>
        <authorList>
            <person name="Theologis A."/>
            <person name="Ecker J.R."/>
            <person name="Palm C.J."/>
            <person name="Federspiel N.A."/>
            <person name="Kaul S."/>
            <person name="White O."/>
            <person name="Alonso J."/>
            <person name="Altafi H."/>
            <person name="Araujo R."/>
            <person name="Bowman C.L."/>
            <person name="Brooks S.Y."/>
            <person name="Buehler E."/>
            <person name="Chan A."/>
            <person name="Chao Q."/>
            <person name="Chen H."/>
            <person name="Cheuk R.F."/>
            <person name="Chin C.W."/>
            <person name="Chung M.K."/>
            <person name="Conn L."/>
            <person name="Conway A.B."/>
            <person name="Conway A.R."/>
            <person name="Creasy T.H."/>
            <person name="Dewar K."/>
            <person name="Dunn P."/>
            <person name="Etgu P."/>
            <person name="Feldblyum T.V."/>
            <person name="Feng J.-D."/>
            <person name="Fong B."/>
            <person name="Fujii C.Y."/>
            <person name="Gill J.E."/>
            <person name="Goldsmith A.D."/>
            <person name="Haas B."/>
            <person name="Hansen N.F."/>
            <person name="Hughes B."/>
            <person name="Huizar L."/>
            <person name="Hunter J.L."/>
            <person name="Jenkins J."/>
            <person name="Johnson-Hopson C."/>
            <person name="Khan S."/>
            <person name="Khaykin E."/>
            <person name="Kim C.J."/>
            <person name="Koo H.L."/>
            <person name="Kremenetskaia I."/>
            <person name="Kurtz D.B."/>
            <person name="Kwan A."/>
            <person name="Lam B."/>
            <person name="Langin-Hooper S."/>
            <person name="Lee A."/>
            <person name="Lee J.M."/>
            <person name="Lenz C.A."/>
            <person name="Li J.H."/>
            <person name="Li Y.-P."/>
            <person name="Lin X."/>
            <person name="Liu S.X."/>
            <person name="Liu Z.A."/>
            <person name="Luros J.S."/>
            <person name="Maiti R."/>
            <person name="Marziali A."/>
            <person name="Militscher J."/>
            <person name="Miranda M."/>
            <person name="Nguyen M."/>
            <person name="Nierman W.C."/>
            <person name="Osborne B.I."/>
            <person name="Pai G."/>
            <person name="Peterson J."/>
            <person name="Pham P.K."/>
            <person name="Rizzo M."/>
            <person name="Rooney T."/>
            <person name="Rowley D."/>
            <person name="Sakano H."/>
            <person name="Salzberg S.L."/>
            <person name="Schwartz J.R."/>
            <person name="Shinn P."/>
            <person name="Southwick A.M."/>
            <person name="Sun H."/>
            <person name="Tallon L.J."/>
            <person name="Tambunga G."/>
            <person name="Toriumi M.J."/>
            <person name="Town C.D."/>
            <person name="Utterback T."/>
            <person name="Van Aken S."/>
            <person name="Vaysberg M."/>
            <person name="Vysotskaia V.S."/>
            <person name="Walker M."/>
            <person name="Wu D."/>
            <person name="Yu G."/>
            <person name="Fraser C.M."/>
            <person name="Venter J.C."/>
            <person name="Davis R.W."/>
        </authorList>
    </citation>
    <scope>NUCLEOTIDE SEQUENCE [LARGE SCALE GENOMIC DNA]</scope>
    <source>
        <strain>cv. Columbia</strain>
    </source>
</reference>
<reference key="2">
    <citation type="journal article" date="2017" name="Plant J.">
        <title>Araport11: a complete reannotation of the Arabidopsis thaliana reference genome.</title>
        <authorList>
            <person name="Cheng C.Y."/>
            <person name="Krishnakumar V."/>
            <person name="Chan A.P."/>
            <person name="Thibaud-Nissen F."/>
            <person name="Schobel S."/>
            <person name="Town C.D."/>
        </authorList>
    </citation>
    <scope>GENOME REANNOTATION</scope>
    <source>
        <strain>cv. Columbia</strain>
    </source>
</reference>
<reference key="3">
    <citation type="journal article" date="2003" name="Science">
        <title>Empirical analysis of transcriptional activity in the Arabidopsis genome.</title>
        <authorList>
            <person name="Yamada K."/>
            <person name="Lim J."/>
            <person name="Dale J.M."/>
            <person name="Chen H."/>
            <person name="Shinn P."/>
            <person name="Palm C.J."/>
            <person name="Southwick A.M."/>
            <person name="Wu H.C."/>
            <person name="Kim C.J."/>
            <person name="Nguyen M."/>
            <person name="Pham P.K."/>
            <person name="Cheuk R.F."/>
            <person name="Karlin-Newmann G."/>
            <person name="Liu S.X."/>
            <person name="Lam B."/>
            <person name="Sakano H."/>
            <person name="Wu T."/>
            <person name="Yu G."/>
            <person name="Miranda M."/>
            <person name="Quach H.L."/>
            <person name="Tripp M."/>
            <person name="Chang C.H."/>
            <person name="Lee J.M."/>
            <person name="Toriumi M.J."/>
            <person name="Chan M.M."/>
            <person name="Tang C.C."/>
            <person name="Onodera C.S."/>
            <person name="Deng J.M."/>
            <person name="Akiyama K."/>
            <person name="Ansari Y."/>
            <person name="Arakawa T."/>
            <person name="Banh J."/>
            <person name="Banno F."/>
            <person name="Bowser L."/>
            <person name="Brooks S.Y."/>
            <person name="Carninci P."/>
            <person name="Chao Q."/>
            <person name="Choy N."/>
            <person name="Enju A."/>
            <person name="Goldsmith A.D."/>
            <person name="Gurjal M."/>
            <person name="Hansen N.F."/>
            <person name="Hayashizaki Y."/>
            <person name="Johnson-Hopson C."/>
            <person name="Hsuan V.W."/>
            <person name="Iida K."/>
            <person name="Karnes M."/>
            <person name="Khan S."/>
            <person name="Koesema E."/>
            <person name="Ishida J."/>
            <person name="Jiang P.X."/>
            <person name="Jones T."/>
            <person name="Kawai J."/>
            <person name="Kamiya A."/>
            <person name="Meyers C."/>
            <person name="Nakajima M."/>
            <person name="Narusaka M."/>
            <person name="Seki M."/>
            <person name="Sakurai T."/>
            <person name="Satou M."/>
            <person name="Tamse R."/>
            <person name="Vaysberg M."/>
            <person name="Wallender E.K."/>
            <person name="Wong C."/>
            <person name="Yamamura Y."/>
            <person name="Yuan S."/>
            <person name="Shinozaki K."/>
            <person name="Davis R.W."/>
            <person name="Theologis A."/>
            <person name="Ecker J.R."/>
        </authorList>
    </citation>
    <scope>NUCLEOTIDE SEQUENCE [LARGE SCALE MRNA]</scope>
    <source>
        <strain>cv. Columbia</strain>
    </source>
</reference>
<reference key="4">
    <citation type="journal article" date="2015" name="J. Biol. Chem.">
        <title>Oxidation of monolignols by members of the berberine bridge enzyme family suggests a role in plant cell wall metabolism.</title>
        <authorList>
            <person name="Daniel B."/>
            <person name="Pavkov-Keller T."/>
            <person name="Steiner B."/>
            <person name="Dordic A."/>
            <person name="Gutmann A."/>
            <person name="Nidetzky B."/>
            <person name="Sensen C.W."/>
            <person name="van der Graaff E."/>
            <person name="Wallner S."/>
            <person name="Gruber K."/>
            <person name="Macheroux P."/>
        </authorList>
    </citation>
    <scope>GENE FAMILY</scope>
    <scope>NOMENCLATURE</scope>
</reference>